<organism>
    <name type="scientific">Heliobacterium modesticaldum (strain ATCC 51547 / Ice1)</name>
    <dbReference type="NCBI Taxonomy" id="498761"/>
    <lineage>
        <taxon>Bacteria</taxon>
        <taxon>Bacillati</taxon>
        <taxon>Bacillota</taxon>
        <taxon>Clostridia</taxon>
        <taxon>Eubacteriales</taxon>
        <taxon>Heliobacteriaceae</taxon>
        <taxon>Heliomicrobium</taxon>
    </lineage>
</organism>
<comment type="function">
    <text evidence="2">F(1)F(0) ATP synthase produces ATP from ADP in the presence of a proton or sodium gradient. F-type ATPases consist of two structural domains, F(1) containing the extramembraneous catalytic core and F(0) containing the membrane proton channel, linked together by a central stalk and a peripheral stalk. During catalysis, ATP synthesis in the catalytic domain of F(1) is coupled via a rotary mechanism of the central stalk subunits to proton translocation.</text>
</comment>
<comment type="function">
    <text evidence="2">Component of the F(0) channel, it forms part of the peripheral stalk, linking F(1) to F(0).</text>
</comment>
<comment type="subunit">
    <text evidence="1">F-type ATPases have 2 components, F(1) - the catalytic core - and F(0) - the membrane proton channel. F(1) has five subunits: alpha(3), beta(3), gamma(1), delta(1), epsilon(1). F(0) has four main subunits: a(1), b(2) and c(10-14). The alpha and beta chains form an alternating ring which encloses part of the gamma chain. F(1) is attached to F(0) by a central stalk formed by the gamma and epsilon chains, while a peripheral stalk is formed by the delta and b chains (By similarity).</text>
</comment>
<comment type="subcellular location">
    <subcellularLocation>
        <location evidence="2">Cell membrane</location>
        <topology evidence="2">Single-pass membrane protein</topology>
    </subcellularLocation>
</comment>
<comment type="similarity">
    <text evidence="2">Belongs to the ATPase B chain family.</text>
</comment>
<sequence>MLESVLHALHLNETFLAMLISFLILVFILQQVAFKPILKALDERRQKVEESISRAENDLEEANRMRAENAAELAKARQEAHDLIARATKVGEEKAQEIVAAAQAEANRLKEKAVADIQREKEKALEELRSHVVNLSILAAEKVIRKNLDEPTQRQLVDEVINEVGKLPC</sequence>
<reference key="1">
    <citation type="journal article" date="2008" name="J. Bacteriol.">
        <title>The genome of Heliobacterium modesticaldum, a phototrophic representative of the Firmicutes containing the simplest photosynthetic apparatus.</title>
        <authorList>
            <person name="Sattley W.M."/>
            <person name="Madigan M.T."/>
            <person name="Swingley W.D."/>
            <person name="Cheung P.C."/>
            <person name="Clocksin K.M."/>
            <person name="Conrad A.L."/>
            <person name="Dejesa L.C."/>
            <person name="Honchak B.M."/>
            <person name="Jung D.O."/>
            <person name="Karbach L.E."/>
            <person name="Kurdoglu A."/>
            <person name="Lahiri S."/>
            <person name="Mastrian S.D."/>
            <person name="Page L.E."/>
            <person name="Taylor H.L."/>
            <person name="Wang Z.T."/>
            <person name="Raymond J."/>
            <person name="Chen M."/>
            <person name="Blankenship R.E."/>
            <person name="Touchman J.W."/>
        </authorList>
    </citation>
    <scope>NUCLEOTIDE SEQUENCE [LARGE SCALE GENOMIC DNA]</scope>
    <source>
        <strain>ATCC 51547 / Ice1</strain>
    </source>
</reference>
<evidence type="ECO:0000250" key="1"/>
<evidence type="ECO:0000255" key="2">
    <source>
        <dbReference type="HAMAP-Rule" id="MF_01398"/>
    </source>
</evidence>
<keyword id="KW-0066">ATP synthesis</keyword>
<keyword id="KW-1003">Cell membrane</keyword>
<keyword id="KW-0138">CF(0)</keyword>
<keyword id="KW-0375">Hydrogen ion transport</keyword>
<keyword id="KW-0406">Ion transport</keyword>
<keyword id="KW-0472">Membrane</keyword>
<keyword id="KW-1185">Reference proteome</keyword>
<keyword id="KW-0812">Transmembrane</keyword>
<keyword id="KW-1133">Transmembrane helix</keyword>
<keyword id="KW-0813">Transport</keyword>
<proteinExistence type="inferred from homology"/>
<dbReference type="EMBL" id="CP000930">
    <property type="protein sequence ID" value="ABZ83474.1"/>
    <property type="molecule type" value="Genomic_DNA"/>
</dbReference>
<dbReference type="RefSeq" id="WP_012282003.1">
    <property type="nucleotide sequence ID" value="NC_010337.2"/>
</dbReference>
<dbReference type="SMR" id="B0TI54"/>
<dbReference type="STRING" id="498761.HM1_1100"/>
<dbReference type="KEGG" id="hmo:HM1_1100"/>
<dbReference type="eggNOG" id="COG0711">
    <property type="taxonomic scope" value="Bacteria"/>
</dbReference>
<dbReference type="HOGENOM" id="CLU_079215_4_1_9"/>
<dbReference type="OrthoDB" id="9795863at2"/>
<dbReference type="Proteomes" id="UP000008550">
    <property type="component" value="Chromosome"/>
</dbReference>
<dbReference type="GO" id="GO:0005886">
    <property type="term" value="C:plasma membrane"/>
    <property type="evidence" value="ECO:0007669"/>
    <property type="project" value="UniProtKB-SubCell"/>
</dbReference>
<dbReference type="GO" id="GO:0045259">
    <property type="term" value="C:proton-transporting ATP synthase complex"/>
    <property type="evidence" value="ECO:0007669"/>
    <property type="project" value="UniProtKB-KW"/>
</dbReference>
<dbReference type="GO" id="GO:0046933">
    <property type="term" value="F:proton-transporting ATP synthase activity, rotational mechanism"/>
    <property type="evidence" value="ECO:0007669"/>
    <property type="project" value="UniProtKB-UniRule"/>
</dbReference>
<dbReference type="GO" id="GO:0046961">
    <property type="term" value="F:proton-transporting ATPase activity, rotational mechanism"/>
    <property type="evidence" value="ECO:0007669"/>
    <property type="project" value="TreeGrafter"/>
</dbReference>
<dbReference type="CDD" id="cd06503">
    <property type="entry name" value="ATP-synt_Fo_b"/>
    <property type="match status" value="1"/>
</dbReference>
<dbReference type="Gene3D" id="1.20.5.620">
    <property type="entry name" value="F1F0 ATP synthase subunit B, membrane domain"/>
    <property type="match status" value="1"/>
</dbReference>
<dbReference type="HAMAP" id="MF_01398">
    <property type="entry name" value="ATP_synth_b_bprime"/>
    <property type="match status" value="1"/>
</dbReference>
<dbReference type="InterPro" id="IPR028987">
    <property type="entry name" value="ATP_synth_B-like_membr_sf"/>
</dbReference>
<dbReference type="InterPro" id="IPR002146">
    <property type="entry name" value="ATP_synth_b/b'su_bac/chlpt"/>
</dbReference>
<dbReference type="InterPro" id="IPR005864">
    <property type="entry name" value="ATP_synth_F0_bsu_bac"/>
</dbReference>
<dbReference type="InterPro" id="IPR050059">
    <property type="entry name" value="ATP_synthase_B_chain"/>
</dbReference>
<dbReference type="NCBIfam" id="TIGR01144">
    <property type="entry name" value="ATP_synt_b"/>
    <property type="match status" value="1"/>
</dbReference>
<dbReference type="PANTHER" id="PTHR33445:SF1">
    <property type="entry name" value="ATP SYNTHASE SUBUNIT B"/>
    <property type="match status" value="1"/>
</dbReference>
<dbReference type="PANTHER" id="PTHR33445">
    <property type="entry name" value="ATP SYNTHASE SUBUNIT B', CHLOROPLASTIC"/>
    <property type="match status" value="1"/>
</dbReference>
<dbReference type="Pfam" id="PF00430">
    <property type="entry name" value="ATP-synt_B"/>
    <property type="match status" value="1"/>
</dbReference>
<dbReference type="SUPFAM" id="SSF81573">
    <property type="entry name" value="F1F0 ATP synthase subunit B, membrane domain"/>
    <property type="match status" value="1"/>
</dbReference>
<protein>
    <recommendedName>
        <fullName evidence="2">ATP synthase subunit b</fullName>
    </recommendedName>
    <alternativeName>
        <fullName evidence="2">ATP synthase F(0) sector subunit b</fullName>
    </alternativeName>
    <alternativeName>
        <fullName evidence="2">ATPase subunit I</fullName>
    </alternativeName>
    <alternativeName>
        <fullName evidence="2">F-type ATPase subunit b</fullName>
        <shortName evidence="2">F-ATPase subunit b</shortName>
    </alternativeName>
</protein>
<feature type="chain" id="PRO_0000368525" description="ATP synthase subunit b">
    <location>
        <begin position="1"/>
        <end position="169"/>
    </location>
</feature>
<feature type="transmembrane region" description="Helical" evidence="2">
    <location>
        <begin position="14"/>
        <end position="34"/>
    </location>
</feature>
<name>ATPF_HELMI</name>
<gene>
    <name evidence="2" type="primary">atpF</name>
    <name type="ordered locus">Helmi_08490</name>
    <name type="ORF">HM1_1100</name>
</gene>
<accession>B0TI54</accession>